<name>PROA_YERPB</name>
<sequence>MNLLEHMGKAAKQASWQLAMLSTAKKNQALAVIANLLESESQTILQANERDMAAARESGMSEALLDRLLLTPARLAAIANDVRQVCRLNDPVGRVIDGSLLDSGLKLERRRVPLGVIGVIYEARPNVTIDVASLCLKTGNAVILRGGKETHHTNQATVNVIQRALEQCGLPAAAVQAIESPDRQLVNELLRLDRYVDMLIPRGGASLHKLCREQSTIPVITGGIGVCHTFVDENADFEKALLVIENAKIQRPSACNSLETLLVHQAVAKTFLPLLSARMHAFGVTLHASPLAMPYLADGKAKVVAVEAADYDDEWLSLDLNVDIVTDIDAAIDHIREHGTSHSDAILTRSLSHAEYFVRAVDSSAVYVNASTRFTDGGQFGLGAEVAVSTQKLHARGPMGLDALTTYKWIGYGDDLVRS</sequence>
<accession>B2K6Q4</accession>
<comment type="function">
    <text evidence="1">Catalyzes the NADPH-dependent reduction of L-glutamate 5-phosphate into L-glutamate 5-semialdehyde and phosphate. The product spontaneously undergoes cyclization to form 1-pyrroline-5-carboxylate.</text>
</comment>
<comment type="catalytic activity">
    <reaction evidence="1">
        <text>L-glutamate 5-semialdehyde + phosphate + NADP(+) = L-glutamyl 5-phosphate + NADPH + H(+)</text>
        <dbReference type="Rhea" id="RHEA:19541"/>
        <dbReference type="ChEBI" id="CHEBI:15378"/>
        <dbReference type="ChEBI" id="CHEBI:43474"/>
        <dbReference type="ChEBI" id="CHEBI:57783"/>
        <dbReference type="ChEBI" id="CHEBI:58066"/>
        <dbReference type="ChEBI" id="CHEBI:58274"/>
        <dbReference type="ChEBI" id="CHEBI:58349"/>
        <dbReference type="EC" id="1.2.1.41"/>
    </reaction>
</comment>
<comment type="pathway">
    <text evidence="1">Amino-acid biosynthesis; L-proline biosynthesis; L-glutamate 5-semialdehyde from L-glutamate: step 2/2.</text>
</comment>
<comment type="subcellular location">
    <subcellularLocation>
        <location evidence="1">Cytoplasm</location>
    </subcellularLocation>
</comment>
<comment type="similarity">
    <text evidence="1">Belongs to the gamma-glutamyl phosphate reductase family.</text>
</comment>
<evidence type="ECO:0000255" key="1">
    <source>
        <dbReference type="HAMAP-Rule" id="MF_00412"/>
    </source>
</evidence>
<feature type="chain" id="PRO_1000193680" description="Gamma-glutamyl phosphate reductase">
    <location>
        <begin position="1"/>
        <end position="419"/>
    </location>
</feature>
<keyword id="KW-0028">Amino-acid biosynthesis</keyword>
<keyword id="KW-0963">Cytoplasm</keyword>
<keyword id="KW-0521">NADP</keyword>
<keyword id="KW-0560">Oxidoreductase</keyword>
<keyword id="KW-0641">Proline biosynthesis</keyword>
<reference key="1">
    <citation type="submission" date="2008-04" db="EMBL/GenBank/DDBJ databases">
        <title>Complete sequence of Yersinia pseudotuberculosis PB1/+.</title>
        <authorList>
            <person name="Copeland A."/>
            <person name="Lucas S."/>
            <person name="Lapidus A."/>
            <person name="Glavina del Rio T."/>
            <person name="Dalin E."/>
            <person name="Tice H."/>
            <person name="Bruce D."/>
            <person name="Goodwin L."/>
            <person name="Pitluck S."/>
            <person name="Munk A.C."/>
            <person name="Brettin T."/>
            <person name="Detter J.C."/>
            <person name="Han C."/>
            <person name="Tapia R."/>
            <person name="Schmutz J."/>
            <person name="Larimer F."/>
            <person name="Land M."/>
            <person name="Hauser L."/>
            <person name="Challacombe J.F."/>
            <person name="Green L."/>
            <person name="Lindler L.E."/>
            <person name="Nikolich M.P."/>
            <person name="Richardson P."/>
        </authorList>
    </citation>
    <scope>NUCLEOTIDE SEQUENCE [LARGE SCALE GENOMIC DNA]</scope>
    <source>
        <strain>PB1/+</strain>
    </source>
</reference>
<protein>
    <recommendedName>
        <fullName evidence="1">Gamma-glutamyl phosphate reductase</fullName>
        <shortName evidence="1">GPR</shortName>
        <ecNumber evidence="1">1.2.1.41</ecNumber>
    </recommendedName>
    <alternativeName>
        <fullName evidence="1">Glutamate-5-semialdehyde dehydrogenase</fullName>
    </alternativeName>
    <alternativeName>
        <fullName evidence="1">Glutamyl-gamma-semialdehyde dehydrogenase</fullName>
        <shortName evidence="1">GSA dehydrogenase</shortName>
    </alternativeName>
</protein>
<gene>
    <name evidence="1" type="primary">proA</name>
    <name type="ordered locus">YPTS_0947</name>
</gene>
<dbReference type="EC" id="1.2.1.41" evidence="1"/>
<dbReference type="EMBL" id="CP001048">
    <property type="protein sequence ID" value="ACC87928.1"/>
    <property type="molecule type" value="Genomic_DNA"/>
</dbReference>
<dbReference type="RefSeq" id="WP_011191846.1">
    <property type="nucleotide sequence ID" value="NZ_CP009780.1"/>
</dbReference>
<dbReference type="SMR" id="B2K6Q4"/>
<dbReference type="KEGG" id="ypb:YPTS_0947"/>
<dbReference type="PATRIC" id="fig|502801.10.peg.284"/>
<dbReference type="UniPathway" id="UPA00098">
    <property type="reaction ID" value="UER00360"/>
</dbReference>
<dbReference type="GO" id="GO:0005737">
    <property type="term" value="C:cytoplasm"/>
    <property type="evidence" value="ECO:0007669"/>
    <property type="project" value="UniProtKB-SubCell"/>
</dbReference>
<dbReference type="GO" id="GO:0004350">
    <property type="term" value="F:glutamate-5-semialdehyde dehydrogenase activity"/>
    <property type="evidence" value="ECO:0007669"/>
    <property type="project" value="UniProtKB-UniRule"/>
</dbReference>
<dbReference type="GO" id="GO:0050661">
    <property type="term" value="F:NADP binding"/>
    <property type="evidence" value="ECO:0007669"/>
    <property type="project" value="InterPro"/>
</dbReference>
<dbReference type="GO" id="GO:0055129">
    <property type="term" value="P:L-proline biosynthetic process"/>
    <property type="evidence" value="ECO:0007669"/>
    <property type="project" value="UniProtKB-UniRule"/>
</dbReference>
<dbReference type="CDD" id="cd07079">
    <property type="entry name" value="ALDH_F18-19_ProA-GPR"/>
    <property type="match status" value="1"/>
</dbReference>
<dbReference type="FunFam" id="3.40.309.10:FF:000006">
    <property type="entry name" value="Gamma-glutamyl phosphate reductase"/>
    <property type="match status" value="1"/>
</dbReference>
<dbReference type="Gene3D" id="3.40.605.10">
    <property type="entry name" value="Aldehyde Dehydrogenase, Chain A, domain 1"/>
    <property type="match status" value="1"/>
</dbReference>
<dbReference type="Gene3D" id="3.40.309.10">
    <property type="entry name" value="Aldehyde Dehydrogenase, Chain A, domain 2"/>
    <property type="match status" value="1"/>
</dbReference>
<dbReference type="HAMAP" id="MF_00412">
    <property type="entry name" value="ProA"/>
    <property type="match status" value="1"/>
</dbReference>
<dbReference type="InterPro" id="IPR016161">
    <property type="entry name" value="Ald_DH/histidinol_DH"/>
</dbReference>
<dbReference type="InterPro" id="IPR016163">
    <property type="entry name" value="Ald_DH_C"/>
</dbReference>
<dbReference type="InterPro" id="IPR016162">
    <property type="entry name" value="Ald_DH_N"/>
</dbReference>
<dbReference type="InterPro" id="IPR015590">
    <property type="entry name" value="Aldehyde_DH_dom"/>
</dbReference>
<dbReference type="InterPro" id="IPR020593">
    <property type="entry name" value="G-glutamylP_reductase_CS"/>
</dbReference>
<dbReference type="InterPro" id="IPR012134">
    <property type="entry name" value="Glu-5-SA_DH"/>
</dbReference>
<dbReference type="InterPro" id="IPR000965">
    <property type="entry name" value="GPR_dom"/>
</dbReference>
<dbReference type="NCBIfam" id="NF001221">
    <property type="entry name" value="PRK00197.1"/>
    <property type="match status" value="1"/>
</dbReference>
<dbReference type="NCBIfam" id="TIGR00407">
    <property type="entry name" value="proA"/>
    <property type="match status" value="1"/>
</dbReference>
<dbReference type="PANTHER" id="PTHR11063:SF8">
    <property type="entry name" value="DELTA-1-PYRROLINE-5-CARBOXYLATE SYNTHASE"/>
    <property type="match status" value="1"/>
</dbReference>
<dbReference type="PANTHER" id="PTHR11063">
    <property type="entry name" value="GLUTAMATE SEMIALDEHYDE DEHYDROGENASE"/>
    <property type="match status" value="1"/>
</dbReference>
<dbReference type="Pfam" id="PF00171">
    <property type="entry name" value="Aldedh"/>
    <property type="match status" value="1"/>
</dbReference>
<dbReference type="PIRSF" id="PIRSF000151">
    <property type="entry name" value="GPR"/>
    <property type="match status" value="1"/>
</dbReference>
<dbReference type="SUPFAM" id="SSF53720">
    <property type="entry name" value="ALDH-like"/>
    <property type="match status" value="1"/>
</dbReference>
<dbReference type="PROSITE" id="PS01223">
    <property type="entry name" value="PROA"/>
    <property type="match status" value="1"/>
</dbReference>
<proteinExistence type="inferred from homology"/>
<organism>
    <name type="scientific">Yersinia pseudotuberculosis serotype IB (strain PB1/+)</name>
    <dbReference type="NCBI Taxonomy" id="502801"/>
    <lineage>
        <taxon>Bacteria</taxon>
        <taxon>Pseudomonadati</taxon>
        <taxon>Pseudomonadota</taxon>
        <taxon>Gammaproteobacteria</taxon>
        <taxon>Enterobacterales</taxon>
        <taxon>Yersiniaceae</taxon>
        <taxon>Yersinia</taxon>
    </lineage>
</organism>